<gene>
    <name evidence="1" type="primary">tig</name>
    <name type="ordered locus">ETA_25110</name>
</gene>
<reference key="1">
    <citation type="journal article" date="2008" name="Environ. Microbiol.">
        <title>The genome of Erwinia tasmaniensis strain Et1/99, a non-pathogenic bacterium in the genus Erwinia.</title>
        <authorList>
            <person name="Kube M."/>
            <person name="Migdoll A.M."/>
            <person name="Mueller I."/>
            <person name="Kuhl H."/>
            <person name="Beck A."/>
            <person name="Reinhardt R."/>
            <person name="Geider K."/>
        </authorList>
    </citation>
    <scope>NUCLEOTIDE SEQUENCE [LARGE SCALE GENOMIC DNA]</scope>
    <source>
        <strain>DSM 17950 / CFBP 7177 / CIP 109463 / NCPPB 4357 / Et1/99</strain>
    </source>
</reference>
<comment type="function">
    <text evidence="1">Involved in protein export. Acts as a chaperone by maintaining the newly synthesized protein in an open conformation. Functions as a peptidyl-prolyl cis-trans isomerase.</text>
</comment>
<comment type="catalytic activity">
    <reaction evidence="1">
        <text>[protein]-peptidylproline (omega=180) = [protein]-peptidylproline (omega=0)</text>
        <dbReference type="Rhea" id="RHEA:16237"/>
        <dbReference type="Rhea" id="RHEA-COMP:10747"/>
        <dbReference type="Rhea" id="RHEA-COMP:10748"/>
        <dbReference type="ChEBI" id="CHEBI:83833"/>
        <dbReference type="ChEBI" id="CHEBI:83834"/>
        <dbReference type="EC" id="5.2.1.8"/>
    </reaction>
</comment>
<comment type="subcellular location">
    <subcellularLocation>
        <location>Cytoplasm</location>
    </subcellularLocation>
    <text evidence="1">About half TF is bound to the ribosome near the polypeptide exit tunnel while the other half is free in the cytoplasm.</text>
</comment>
<comment type="domain">
    <text evidence="1">Consists of 3 domains; the N-terminus binds the ribosome, the middle domain has PPIase activity, while the C-terminus has intrinsic chaperone activity on its own.</text>
</comment>
<comment type="similarity">
    <text evidence="1">Belongs to the FKBP-type PPIase family. Tig subfamily.</text>
</comment>
<protein>
    <recommendedName>
        <fullName evidence="1">Trigger factor</fullName>
        <shortName evidence="1">TF</shortName>
        <ecNumber evidence="1">5.2.1.8</ecNumber>
    </recommendedName>
    <alternativeName>
        <fullName evidence="1">PPIase</fullName>
    </alternativeName>
</protein>
<keyword id="KW-0131">Cell cycle</keyword>
<keyword id="KW-0132">Cell division</keyword>
<keyword id="KW-0143">Chaperone</keyword>
<keyword id="KW-0963">Cytoplasm</keyword>
<keyword id="KW-0413">Isomerase</keyword>
<keyword id="KW-1185">Reference proteome</keyword>
<keyword id="KW-0697">Rotamase</keyword>
<dbReference type="EC" id="5.2.1.8" evidence="1"/>
<dbReference type="EMBL" id="CU468135">
    <property type="protein sequence ID" value="CAO97557.1"/>
    <property type="molecule type" value="Genomic_DNA"/>
</dbReference>
<dbReference type="RefSeq" id="WP_012442223.1">
    <property type="nucleotide sequence ID" value="NC_010694.1"/>
</dbReference>
<dbReference type="SMR" id="B2VHT7"/>
<dbReference type="STRING" id="465817.ETA_25110"/>
<dbReference type="KEGG" id="eta:ETA_25110"/>
<dbReference type="eggNOG" id="COG0544">
    <property type="taxonomic scope" value="Bacteria"/>
</dbReference>
<dbReference type="HOGENOM" id="CLU_033058_2_0_6"/>
<dbReference type="OrthoDB" id="9767721at2"/>
<dbReference type="Proteomes" id="UP000001726">
    <property type="component" value="Chromosome"/>
</dbReference>
<dbReference type="GO" id="GO:0005737">
    <property type="term" value="C:cytoplasm"/>
    <property type="evidence" value="ECO:0007669"/>
    <property type="project" value="UniProtKB-SubCell"/>
</dbReference>
<dbReference type="GO" id="GO:0003755">
    <property type="term" value="F:peptidyl-prolyl cis-trans isomerase activity"/>
    <property type="evidence" value="ECO:0007669"/>
    <property type="project" value="UniProtKB-UniRule"/>
</dbReference>
<dbReference type="GO" id="GO:0044183">
    <property type="term" value="F:protein folding chaperone"/>
    <property type="evidence" value="ECO:0007669"/>
    <property type="project" value="TreeGrafter"/>
</dbReference>
<dbReference type="GO" id="GO:0043022">
    <property type="term" value="F:ribosome binding"/>
    <property type="evidence" value="ECO:0007669"/>
    <property type="project" value="TreeGrafter"/>
</dbReference>
<dbReference type="GO" id="GO:0051083">
    <property type="term" value="P:'de novo' cotranslational protein folding"/>
    <property type="evidence" value="ECO:0007669"/>
    <property type="project" value="TreeGrafter"/>
</dbReference>
<dbReference type="GO" id="GO:0051301">
    <property type="term" value="P:cell division"/>
    <property type="evidence" value="ECO:0007669"/>
    <property type="project" value="UniProtKB-KW"/>
</dbReference>
<dbReference type="GO" id="GO:0061077">
    <property type="term" value="P:chaperone-mediated protein folding"/>
    <property type="evidence" value="ECO:0007669"/>
    <property type="project" value="TreeGrafter"/>
</dbReference>
<dbReference type="GO" id="GO:0015031">
    <property type="term" value="P:protein transport"/>
    <property type="evidence" value="ECO:0007669"/>
    <property type="project" value="UniProtKB-UniRule"/>
</dbReference>
<dbReference type="GO" id="GO:0043335">
    <property type="term" value="P:protein unfolding"/>
    <property type="evidence" value="ECO:0007669"/>
    <property type="project" value="TreeGrafter"/>
</dbReference>
<dbReference type="FunFam" id="1.10.3120.10:FF:000001">
    <property type="entry name" value="Trigger factor"/>
    <property type="match status" value="1"/>
</dbReference>
<dbReference type="FunFam" id="3.10.50.40:FF:000001">
    <property type="entry name" value="Trigger factor"/>
    <property type="match status" value="1"/>
</dbReference>
<dbReference type="FunFam" id="3.30.70.1050:FF:000001">
    <property type="entry name" value="Trigger factor"/>
    <property type="match status" value="1"/>
</dbReference>
<dbReference type="Gene3D" id="3.10.50.40">
    <property type="match status" value="1"/>
</dbReference>
<dbReference type="Gene3D" id="3.30.70.1050">
    <property type="entry name" value="Trigger factor ribosome-binding domain"/>
    <property type="match status" value="1"/>
</dbReference>
<dbReference type="Gene3D" id="1.10.3120.10">
    <property type="entry name" value="Trigger factor, C-terminal domain"/>
    <property type="match status" value="1"/>
</dbReference>
<dbReference type="HAMAP" id="MF_00303">
    <property type="entry name" value="Trigger_factor_Tig"/>
    <property type="match status" value="1"/>
</dbReference>
<dbReference type="InterPro" id="IPR046357">
    <property type="entry name" value="PPIase_dom_sf"/>
</dbReference>
<dbReference type="InterPro" id="IPR001179">
    <property type="entry name" value="PPIase_FKBP_dom"/>
</dbReference>
<dbReference type="InterPro" id="IPR005215">
    <property type="entry name" value="Trig_fac"/>
</dbReference>
<dbReference type="InterPro" id="IPR008880">
    <property type="entry name" value="Trigger_fac_C"/>
</dbReference>
<dbReference type="InterPro" id="IPR037041">
    <property type="entry name" value="Trigger_fac_C_sf"/>
</dbReference>
<dbReference type="InterPro" id="IPR008881">
    <property type="entry name" value="Trigger_fac_ribosome-bd_bac"/>
</dbReference>
<dbReference type="InterPro" id="IPR036611">
    <property type="entry name" value="Trigger_fac_ribosome-bd_sf"/>
</dbReference>
<dbReference type="InterPro" id="IPR027304">
    <property type="entry name" value="Trigger_fact/SurA_dom_sf"/>
</dbReference>
<dbReference type="NCBIfam" id="TIGR00115">
    <property type="entry name" value="tig"/>
    <property type="match status" value="1"/>
</dbReference>
<dbReference type="PANTHER" id="PTHR30560">
    <property type="entry name" value="TRIGGER FACTOR CHAPERONE AND PEPTIDYL-PROLYL CIS/TRANS ISOMERASE"/>
    <property type="match status" value="1"/>
</dbReference>
<dbReference type="PANTHER" id="PTHR30560:SF3">
    <property type="entry name" value="TRIGGER FACTOR-LIKE PROTEIN TIG, CHLOROPLASTIC"/>
    <property type="match status" value="1"/>
</dbReference>
<dbReference type="Pfam" id="PF00254">
    <property type="entry name" value="FKBP_C"/>
    <property type="match status" value="1"/>
</dbReference>
<dbReference type="Pfam" id="PF05698">
    <property type="entry name" value="Trigger_C"/>
    <property type="match status" value="1"/>
</dbReference>
<dbReference type="Pfam" id="PF05697">
    <property type="entry name" value="Trigger_N"/>
    <property type="match status" value="1"/>
</dbReference>
<dbReference type="PIRSF" id="PIRSF003095">
    <property type="entry name" value="Trigger_factor"/>
    <property type="match status" value="1"/>
</dbReference>
<dbReference type="SUPFAM" id="SSF54534">
    <property type="entry name" value="FKBP-like"/>
    <property type="match status" value="1"/>
</dbReference>
<dbReference type="SUPFAM" id="SSF109998">
    <property type="entry name" value="Triger factor/SurA peptide-binding domain-like"/>
    <property type="match status" value="1"/>
</dbReference>
<dbReference type="SUPFAM" id="SSF102735">
    <property type="entry name" value="Trigger factor ribosome-binding domain"/>
    <property type="match status" value="1"/>
</dbReference>
<dbReference type="PROSITE" id="PS50059">
    <property type="entry name" value="FKBP_PPIASE"/>
    <property type="match status" value="1"/>
</dbReference>
<organism>
    <name type="scientific">Erwinia tasmaniensis (strain DSM 17950 / CFBP 7177 / CIP 109463 / NCPPB 4357 / Et1/99)</name>
    <dbReference type="NCBI Taxonomy" id="465817"/>
    <lineage>
        <taxon>Bacteria</taxon>
        <taxon>Pseudomonadati</taxon>
        <taxon>Pseudomonadota</taxon>
        <taxon>Gammaproteobacteria</taxon>
        <taxon>Enterobacterales</taxon>
        <taxon>Erwiniaceae</taxon>
        <taxon>Erwinia</taxon>
    </lineage>
</organism>
<accession>B2VHT7</accession>
<proteinExistence type="inferred from homology"/>
<feature type="chain" id="PRO_1000115533" description="Trigger factor">
    <location>
        <begin position="1"/>
        <end position="434"/>
    </location>
</feature>
<feature type="domain" description="PPIase FKBP-type" evidence="1">
    <location>
        <begin position="161"/>
        <end position="246"/>
    </location>
</feature>
<name>TIG_ERWT9</name>
<sequence length="434" mass="48189">MQVSVETTQGLGRRVTITVDKDVIENAVKSELVSVAKKVRIDGFRKGKVPMTVVAQRYGASVRQDVLGDLMQRNFVDAIIKEKINPAGSPQYVPGEYKIGEDFTFSAEFEVYPEVELQGLDAIEVEKPVVEVTEADVDTMLETLRKQQATWKETDAAATAEDRATIDFSGSVDGEEFEGGKASDFVLAMGQGRMIPGFEEGVVGHKAGETFTIDVNFPEDYHAENLKGKAAKFDIVLKKVEERELPELTEEFIKRFGVEAGSLDGLRAEVRKNMQRELKGAVRNRVKTQAIDGLVKANDIDVPAALVDGEIDVLKRQAAQRFGGDEKQALELPRELFEEQAKRRVVVGLLLGEVIRTHELKADETRVNALIEEMASAYEDPSEVIEFYSKNNELMNNMRNVALEEQAVEAVLEKAKVTEKATNFQELMNQTATA</sequence>
<evidence type="ECO:0000255" key="1">
    <source>
        <dbReference type="HAMAP-Rule" id="MF_00303"/>
    </source>
</evidence>